<proteinExistence type="inferred from homology"/>
<feature type="chain" id="PRO_0000182158" description="UDP-N-acetylmuramate--L-alanine ligase">
    <location>
        <begin position="1"/>
        <end position="437"/>
    </location>
</feature>
<feature type="binding site" evidence="1">
    <location>
        <begin position="108"/>
        <end position="114"/>
    </location>
    <ligand>
        <name>ATP</name>
        <dbReference type="ChEBI" id="CHEBI:30616"/>
    </ligand>
</feature>
<organism>
    <name type="scientific">Staphylococcus aureus</name>
    <dbReference type="NCBI Taxonomy" id="1280"/>
    <lineage>
        <taxon>Bacteria</taxon>
        <taxon>Bacillati</taxon>
        <taxon>Bacillota</taxon>
        <taxon>Bacilli</taxon>
        <taxon>Bacillales</taxon>
        <taxon>Staphylococcaceae</taxon>
        <taxon>Staphylococcus</taxon>
    </lineage>
</organism>
<comment type="function">
    <text evidence="1">Cell wall formation.</text>
</comment>
<comment type="catalytic activity">
    <reaction evidence="1">
        <text>UDP-N-acetyl-alpha-D-muramate + L-alanine + ATP = UDP-N-acetyl-alpha-D-muramoyl-L-alanine + ADP + phosphate + H(+)</text>
        <dbReference type="Rhea" id="RHEA:23372"/>
        <dbReference type="ChEBI" id="CHEBI:15378"/>
        <dbReference type="ChEBI" id="CHEBI:30616"/>
        <dbReference type="ChEBI" id="CHEBI:43474"/>
        <dbReference type="ChEBI" id="CHEBI:57972"/>
        <dbReference type="ChEBI" id="CHEBI:70757"/>
        <dbReference type="ChEBI" id="CHEBI:83898"/>
        <dbReference type="ChEBI" id="CHEBI:456216"/>
        <dbReference type="EC" id="6.3.2.8"/>
    </reaction>
</comment>
<comment type="pathway">
    <text evidence="1">Cell wall biogenesis; peptidoglycan biosynthesis.</text>
</comment>
<comment type="subcellular location">
    <subcellularLocation>
        <location evidence="1">Cytoplasm</location>
    </subcellularLocation>
</comment>
<comment type="similarity">
    <text evidence="1">Belongs to the MurCDEF family.</text>
</comment>
<name>MURC_STAAU</name>
<sequence>MTHYHFVGIKGSGMSSLAQIMHDLGHEVQGSDIENYVFTEVALRNKGIKILPFDANNIKEDMVVIQGNAFASSHEEKARAHQMKLDVVSYNDFLGQIIDQYTSVAVTGAHGKTSTTGLLSHVMNGDKKTSFLIGDGTGMGLPESDYFAFEACEYRRHFLSYKPDYAIMTNIDFDHPDYFKDINDVFDAFQEMAHNVKKGIIAWGDDEHLRKIEADVPIYYYGFKDSDDIYAQNIQITDKGTAFDVYVDGEFYDHFLSPQYGDHTVLNALAVIAISYLEKLDVTNIKEALETFGGVKRRFNETTIANQVIVDDYAHHPREISATIETARKKYPHKEVVAVFQPHTFSRTQAFLNEFAESLSKADRVFLCEIFGSIRENTGALTIQDLIDKIEGASLINEDSINVLEQFDNAVVLFKGAGDIQKLQNAYLDKLGMKNAF</sequence>
<dbReference type="EC" id="6.3.2.8" evidence="1"/>
<dbReference type="EMBL" id="AF034076">
    <property type="protein sequence ID" value="AAB87090.1"/>
    <property type="molecule type" value="Genomic_DNA"/>
</dbReference>
<dbReference type="SMR" id="O31211"/>
<dbReference type="BindingDB" id="O31211"/>
<dbReference type="ChEMBL" id="CHEMBL4623"/>
<dbReference type="BioCyc" id="MetaCyc:MONOMER-15459"/>
<dbReference type="UniPathway" id="UPA00219"/>
<dbReference type="GO" id="GO:0005737">
    <property type="term" value="C:cytoplasm"/>
    <property type="evidence" value="ECO:0007669"/>
    <property type="project" value="UniProtKB-SubCell"/>
</dbReference>
<dbReference type="GO" id="GO:0005524">
    <property type="term" value="F:ATP binding"/>
    <property type="evidence" value="ECO:0007669"/>
    <property type="project" value="UniProtKB-UniRule"/>
</dbReference>
<dbReference type="GO" id="GO:0008763">
    <property type="term" value="F:UDP-N-acetylmuramate-L-alanine ligase activity"/>
    <property type="evidence" value="ECO:0007669"/>
    <property type="project" value="UniProtKB-UniRule"/>
</dbReference>
<dbReference type="GO" id="GO:0051301">
    <property type="term" value="P:cell division"/>
    <property type="evidence" value="ECO:0007669"/>
    <property type="project" value="UniProtKB-KW"/>
</dbReference>
<dbReference type="GO" id="GO:0071555">
    <property type="term" value="P:cell wall organization"/>
    <property type="evidence" value="ECO:0007669"/>
    <property type="project" value="UniProtKB-KW"/>
</dbReference>
<dbReference type="GO" id="GO:0009252">
    <property type="term" value="P:peptidoglycan biosynthetic process"/>
    <property type="evidence" value="ECO:0007669"/>
    <property type="project" value="UniProtKB-UniRule"/>
</dbReference>
<dbReference type="GO" id="GO:0008360">
    <property type="term" value="P:regulation of cell shape"/>
    <property type="evidence" value="ECO:0007669"/>
    <property type="project" value="UniProtKB-KW"/>
</dbReference>
<dbReference type="Gene3D" id="3.90.190.20">
    <property type="entry name" value="Mur ligase, C-terminal domain"/>
    <property type="match status" value="1"/>
</dbReference>
<dbReference type="Gene3D" id="3.40.1190.10">
    <property type="entry name" value="Mur-like, catalytic domain"/>
    <property type="match status" value="1"/>
</dbReference>
<dbReference type="Gene3D" id="3.40.50.720">
    <property type="entry name" value="NAD(P)-binding Rossmann-like Domain"/>
    <property type="match status" value="1"/>
</dbReference>
<dbReference type="HAMAP" id="MF_00046">
    <property type="entry name" value="MurC"/>
    <property type="match status" value="1"/>
</dbReference>
<dbReference type="InterPro" id="IPR036565">
    <property type="entry name" value="Mur-like_cat_sf"/>
</dbReference>
<dbReference type="InterPro" id="IPR004101">
    <property type="entry name" value="Mur_ligase_C"/>
</dbReference>
<dbReference type="InterPro" id="IPR036615">
    <property type="entry name" value="Mur_ligase_C_dom_sf"/>
</dbReference>
<dbReference type="InterPro" id="IPR013221">
    <property type="entry name" value="Mur_ligase_cen"/>
</dbReference>
<dbReference type="InterPro" id="IPR000713">
    <property type="entry name" value="Mur_ligase_N"/>
</dbReference>
<dbReference type="InterPro" id="IPR050061">
    <property type="entry name" value="MurCDEF_pg_biosynth"/>
</dbReference>
<dbReference type="InterPro" id="IPR005758">
    <property type="entry name" value="UDP-N-AcMur_Ala_ligase_MurC"/>
</dbReference>
<dbReference type="NCBIfam" id="TIGR01082">
    <property type="entry name" value="murC"/>
    <property type="match status" value="1"/>
</dbReference>
<dbReference type="PANTHER" id="PTHR43445:SF3">
    <property type="entry name" value="UDP-N-ACETYLMURAMATE--L-ALANINE LIGASE"/>
    <property type="match status" value="1"/>
</dbReference>
<dbReference type="PANTHER" id="PTHR43445">
    <property type="entry name" value="UDP-N-ACETYLMURAMATE--L-ALANINE LIGASE-RELATED"/>
    <property type="match status" value="1"/>
</dbReference>
<dbReference type="Pfam" id="PF01225">
    <property type="entry name" value="Mur_ligase"/>
    <property type="match status" value="1"/>
</dbReference>
<dbReference type="Pfam" id="PF02875">
    <property type="entry name" value="Mur_ligase_C"/>
    <property type="match status" value="1"/>
</dbReference>
<dbReference type="Pfam" id="PF08245">
    <property type="entry name" value="Mur_ligase_M"/>
    <property type="match status" value="1"/>
</dbReference>
<dbReference type="SUPFAM" id="SSF51984">
    <property type="entry name" value="MurCD N-terminal domain"/>
    <property type="match status" value="1"/>
</dbReference>
<dbReference type="SUPFAM" id="SSF53623">
    <property type="entry name" value="MurD-like peptide ligases, catalytic domain"/>
    <property type="match status" value="1"/>
</dbReference>
<dbReference type="SUPFAM" id="SSF53244">
    <property type="entry name" value="MurD-like peptide ligases, peptide-binding domain"/>
    <property type="match status" value="1"/>
</dbReference>
<protein>
    <recommendedName>
        <fullName evidence="1">UDP-N-acetylmuramate--L-alanine ligase</fullName>
        <ecNumber evidence="1">6.3.2.8</ecNumber>
    </recommendedName>
    <alternativeName>
        <fullName evidence="1">UDP-N-acetylmuramoyl-L-alanine synthetase</fullName>
    </alternativeName>
</protein>
<accession>O31211</accession>
<keyword id="KW-0067">ATP-binding</keyword>
<keyword id="KW-0131">Cell cycle</keyword>
<keyword id="KW-0132">Cell division</keyword>
<keyword id="KW-0133">Cell shape</keyword>
<keyword id="KW-0961">Cell wall biogenesis/degradation</keyword>
<keyword id="KW-0963">Cytoplasm</keyword>
<keyword id="KW-0436">Ligase</keyword>
<keyword id="KW-0547">Nucleotide-binding</keyword>
<keyword id="KW-0573">Peptidoglycan synthesis</keyword>
<reference key="1">
    <citation type="submission" date="1997-11" db="EMBL/GenBank/DDBJ databases">
        <authorList>
            <person name="Lowe A.M."/>
            <person name="Deresiewicz R.L."/>
        </authorList>
    </citation>
    <scope>NUCLEOTIDE SEQUENCE [GENOMIC DNA]</scope>
</reference>
<gene>
    <name evidence="1" type="primary">murC</name>
</gene>
<evidence type="ECO:0000255" key="1">
    <source>
        <dbReference type="HAMAP-Rule" id="MF_00046"/>
    </source>
</evidence>